<proteinExistence type="inferred from homology"/>
<evidence type="ECO:0000255" key="1">
    <source>
        <dbReference type="HAMAP-Rule" id="MF_01394"/>
    </source>
</evidence>
<dbReference type="EC" id="7.1.1.-" evidence="1"/>
<dbReference type="EMBL" id="CP000764">
    <property type="protein sequence ID" value="ABS24009.1"/>
    <property type="molecule type" value="Genomic_DNA"/>
</dbReference>
<dbReference type="RefSeq" id="WP_012096267.1">
    <property type="nucleotide sequence ID" value="NC_009674.1"/>
</dbReference>
<dbReference type="SMR" id="A7GV51"/>
<dbReference type="STRING" id="315749.Bcer98_3819"/>
<dbReference type="GeneID" id="33899060"/>
<dbReference type="KEGG" id="bcy:Bcer98_3819"/>
<dbReference type="eggNOG" id="COG0838">
    <property type="taxonomic scope" value="Bacteria"/>
</dbReference>
<dbReference type="HOGENOM" id="CLU_119549_1_1_9"/>
<dbReference type="OrthoDB" id="9791970at2"/>
<dbReference type="Proteomes" id="UP000002300">
    <property type="component" value="Chromosome"/>
</dbReference>
<dbReference type="GO" id="GO:0030964">
    <property type="term" value="C:NADH dehydrogenase complex"/>
    <property type="evidence" value="ECO:0007669"/>
    <property type="project" value="TreeGrafter"/>
</dbReference>
<dbReference type="GO" id="GO:0005886">
    <property type="term" value="C:plasma membrane"/>
    <property type="evidence" value="ECO:0007669"/>
    <property type="project" value="UniProtKB-SubCell"/>
</dbReference>
<dbReference type="GO" id="GO:0008137">
    <property type="term" value="F:NADH dehydrogenase (ubiquinone) activity"/>
    <property type="evidence" value="ECO:0007669"/>
    <property type="project" value="InterPro"/>
</dbReference>
<dbReference type="GO" id="GO:0050136">
    <property type="term" value="F:NADH:ubiquinone reductase (non-electrogenic) activity"/>
    <property type="evidence" value="ECO:0007669"/>
    <property type="project" value="UniProtKB-UniRule"/>
</dbReference>
<dbReference type="GO" id="GO:0048038">
    <property type="term" value="F:quinone binding"/>
    <property type="evidence" value="ECO:0007669"/>
    <property type="project" value="UniProtKB-KW"/>
</dbReference>
<dbReference type="FunFam" id="1.20.58.1610:FF:000005">
    <property type="entry name" value="NADH-quinone oxidoreductase subunit A"/>
    <property type="match status" value="1"/>
</dbReference>
<dbReference type="Gene3D" id="1.20.58.1610">
    <property type="entry name" value="NADH:ubiquinone/plastoquinone oxidoreductase, chain 3"/>
    <property type="match status" value="1"/>
</dbReference>
<dbReference type="HAMAP" id="MF_01394">
    <property type="entry name" value="NDH1_NuoA"/>
    <property type="match status" value="1"/>
</dbReference>
<dbReference type="InterPro" id="IPR023043">
    <property type="entry name" value="NAD(P)H_OxRDtase_bac/plastid"/>
</dbReference>
<dbReference type="InterPro" id="IPR000440">
    <property type="entry name" value="NADH_UbQ/plastoQ_OxRdtase_su3"/>
</dbReference>
<dbReference type="InterPro" id="IPR038430">
    <property type="entry name" value="NDAH_ubi_oxred_su3_sf"/>
</dbReference>
<dbReference type="NCBIfam" id="NF005839">
    <property type="entry name" value="PRK07756.1"/>
    <property type="match status" value="1"/>
</dbReference>
<dbReference type="PANTHER" id="PTHR11058">
    <property type="entry name" value="NADH-UBIQUINONE OXIDOREDUCTASE CHAIN 3"/>
    <property type="match status" value="1"/>
</dbReference>
<dbReference type="PANTHER" id="PTHR11058:SF9">
    <property type="entry name" value="NADH-UBIQUINONE OXIDOREDUCTASE CHAIN 3"/>
    <property type="match status" value="1"/>
</dbReference>
<dbReference type="Pfam" id="PF00507">
    <property type="entry name" value="Oxidored_q4"/>
    <property type="match status" value="1"/>
</dbReference>
<sequence>MENVYENSYMIVGIFLLLGILLPVVALTLGKLLRPHKPSEAKNTTYESGIEPYHDANVRFHARYYIFALLFVIFDVETLFLYPWAVAYDKLGLFALIEMLIFVAMLLIGLAYAWKKKVLQWL</sequence>
<reference key="1">
    <citation type="journal article" date="2008" name="Chem. Biol. Interact.">
        <title>Extending the Bacillus cereus group genomics to putative food-borne pathogens of different toxicity.</title>
        <authorList>
            <person name="Lapidus A."/>
            <person name="Goltsman E."/>
            <person name="Auger S."/>
            <person name="Galleron N."/>
            <person name="Segurens B."/>
            <person name="Dossat C."/>
            <person name="Land M.L."/>
            <person name="Broussolle V."/>
            <person name="Brillard J."/>
            <person name="Guinebretiere M.-H."/>
            <person name="Sanchis V."/>
            <person name="Nguen-the C."/>
            <person name="Lereclus D."/>
            <person name="Richardson P."/>
            <person name="Wincker P."/>
            <person name="Weissenbach J."/>
            <person name="Ehrlich S.D."/>
            <person name="Sorokin A."/>
        </authorList>
    </citation>
    <scope>NUCLEOTIDE SEQUENCE [LARGE SCALE GENOMIC DNA]</scope>
    <source>
        <strain>DSM 22905 / CIP 110041 / 391-98 / NVH 391-98</strain>
    </source>
</reference>
<feature type="chain" id="PRO_0000362623" description="NADH-quinone oxidoreductase subunit A">
    <location>
        <begin position="1"/>
        <end position="122"/>
    </location>
</feature>
<feature type="transmembrane region" description="Helical" evidence="1">
    <location>
        <begin position="10"/>
        <end position="30"/>
    </location>
</feature>
<feature type="transmembrane region" description="Helical" evidence="1">
    <location>
        <begin position="66"/>
        <end position="86"/>
    </location>
</feature>
<feature type="transmembrane region" description="Helical" evidence="1">
    <location>
        <begin position="91"/>
        <end position="111"/>
    </location>
</feature>
<keyword id="KW-1003">Cell membrane</keyword>
<keyword id="KW-0472">Membrane</keyword>
<keyword id="KW-0520">NAD</keyword>
<keyword id="KW-0874">Quinone</keyword>
<keyword id="KW-1278">Translocase</keyword>
<keyword id="KW-0812">Transmembrane</keyword>
<keyword id="KW-1133">Transmembrane helix</keyword>
<keyword id="KW-0813">Transport</keyword>
<protein>
    <recommendedName>
        <fullName evidence="1">NADH-quinone oxidoreductase subunit A</fullName>
        <ecNumber evidence="1">7.1.1.-</ecNumber>
    </recommendedName>
    <alternativeName>
        <fullName evidence="1">NADH dehydrogenase I subunit A</fullName>
    </alternativeName>
    <alternativeName>
        <fullName evidence="1">NDH-1 subunit A</fullName>
    </alternativeName>
    <alternativeName>
        <fullName evidence="1">NUO1</fullName>
    </alternativeName>
</protein>
<name>NUOA_BACCN</name>
<accession>A7GV51</accession>
<comment type="function">
    <text evidence="1">NDH-1 shuttles electrons from NADH, via FMN and iron-sulfur (Fe-S) centers, to quinones in the respiratory chain. The immediate electron acceptor for the enzyme in this species is believed to be a menaquinone. Couples the redox reaction to proton translocation (for every two electrons transferred, four hydrogen ions are translocated across the cytoplasmic membrane), and thus conserves the redox energy in a proton gradient.</text>
</comment>
<comment type="catalytic activity">
    <reaction evidence="1">
        <text>a quinone + NADH + 5 H(+)(in) = a quinol + NAD(+) + 4 H(+)(out)</text>
        <dbReference type="Rhea" id="RHEA:57888"/>
        <dbReference type="ChEBI" id="CHEBI:15378"/>
        <dbReference type="ChEBI" id="CHEBI:24646"/>
        <dbReference type="ChEBI" id="CHEBI:57540"/>
        <dbReference type="ChEBI" id="CHEBI:57945"/>
        <dbReference type="ChEBI" id="CHEBI:132124"/>
    </reaction>
</comment>
<comment type="subunit">
    <text evidence="1">NDH-1 is composed of 14 different subunits. Subunits NuoA, H, J, K, L, M, N constitute the membrane sector of the complex.</text>
</comment>
<comment type="subcellular location">
    <subcellularLocation>
        <location evidence="1">Cell membrane</location>
        <topology evidence="1">Multi-pass membrane protein</topology>
    </subcellularLocation>
</comment>
<comment type="similarity">
    <text evidence="1">Belongs to the complex I subunit 3 family.</text>
</comment>
<gene>
    <name evidence="1" type="primary">nuoA</name>
    <name type="ordered locus">Bcer98_3819</name>
</gene>
<organism>
    <name type="scientific">Bacillus cytotoxicus (strain DSM 22905 / CIP 110041 / 391-98 / NVH 391-98)</name>
    <dbReference type="NCBI Taxonomy" id="315749"/>
    <lineage>
        <taxon>Bacteria</taxon>
        <taxon>Bacillati</taxon>
        <taxon>Bacillota</taxon>
        <taxon>Bacilli</taxon>
        <taxon>Bacillales</taxon>
        <taxon>Bacillaceae</taxon>
        <taxon>Bacillus</taxon>
        <taxon>Bacillus cereus group</taxon>
    </lineage>
</organism>